<gene>
    <name evidence="5" type="ORF">Bm5439</name>
</gene>
<evidence type="ECO:0000250" key="1"/>
<evidence type="ECO:0000255" key="2">
    <source>
        <dbReference type="PROSITE-ProRule" id="PRU00091"/>
    </source>
</evidence>
<evidence type="ECO:0000256" key="3">
    <source>
        <dbReference type="SAM" id="MobiDB-lite"/>
    </source>
</evidence>
<evidence type="ECO:0000305" key="4"/>
<evidence type="ECO:0000312" key="5">
    <source>
        <dbReference type="WormBase" id="Bm5439"/>
    </source>
</evidence>
<reference key="1">
    <citation type="journal article" date="2007" name="Science">
        <title>Draft genome of the filarial nematode parasite Brugia malayi.</title>
        <authorList>
            <person name="Ghedin E."/>
            <person name="Wang S."/>
            <person name="Spiro D."/>
            <person name="Caler E."/>
            <person name="Zhao Q."/>
            <person name="Crabtree J."/>
            <person name="Allen J.E."/>
            <person name="Delcher A.L."/>
            <person name="Guiliano D.B."/>
            <person name="Miranda-Saavedra D."/>
            <person name="Angiuoli S.V."/>
            <person name="Creasy T."/>
            <person name="Amedeo P."/>
            <person name="Haas B."/>
            <person name="El-Sayed N.M."/>
            <person name="Wortman J.R."/>
            <person name="Feldblyum T."/>
            <person name="Tallon L."/>
            <person name="Schatz M."/>
            <person name="Shumway M."/>
            <person name="Koo H."/>
            <person name="Salzberg S.L."/>
            <person name="Schobel S."/>
            <person name="Pertea M."/>
            <person name="Pop M."/>
            <person name="White O."/>
            <person name="Barton G.J."/>
            <person name="Carlow C.K.S."/>
            <person name="Crawford M.J."/>
            <person name="Daub J."/>
            <person name="Dimmic M.W."/>
            <person name="Estes C.F."/>
            <person name="Foster J.M."/>
            <person name="Ganatra M."/>
            <person name="Gregory W.F."/>
            <person name="Johnson N.M."/>
            <person name="Jin J."/>
            <person name="Komuniecki R."/>
            <person name="Korf I."/>
            <person name="Kumar S."/>
            <person name="Laney S."/>
            <person name="Li B.-W."/>
            <person name="Li W."/>
            <person name="Lindblom T.H."/>
            <person name="Lustigman S."/>
            <person name="Ma D."/>
            <person name="Maina C.V."/>
            <person name="Martin D.M."/>
            <person name="McCarter J.P."/>
            <person name="McReynolds L."/>
            <person name="Mitreva M."/>
            <person name="Nutman T.B."/>
            <person name="Parkinson J."/>
            <person name="Peregrin-Alvarez J.M."/>
            <person name="Poole C."/>
            <person name="Ren Q."/>
            <person name="Saunders L."/>
            <person name="Sluder A.E."/>
            <person name="Smith K."/>
            <person name="Stanke M."/>
            <person name="Unnasch T.R."/>
            <person name="Ware J."/>
            <person name="Wei A.D."/>
            <person name="Weil G."/>
            <person name="Williams D.J."/>
            <person name="Zhang Y."/>
            <person name="Williams S.A."/>
            <person name="Fraser-Liggett C."/>
            <person name="Slatko B."/>
            <person name="Blaxter M.L."/>
            <person name="Scott A.L."/>
        </authorList>
    </citation>
    <scope>NUCLEOTIDE SEQUENCE [LARGE SCALE GENOMIC DNA]</scope>
</reference>
<feature type="chain" id="PRO_0000378960" description="Lateral signaling target protein 2 homolog">
    <location>
        <begin position="1"/>
        <end position="619"/>
    </location>
</feature>
<feature type="zinc finger region" description="FYVE-type" evidence="2">
    <location>
        <begin position="501"/>
        <end position="561"/>
    </location>
</feature>
<feature type="region of interest" description="Disordered" evidence="3">
    <location>
        <begin position="598"/>
        <end position="619"/>
    </location>
</feature>
<feature type="compositionally biased region" description="Polar residues" evidence="3">
    <location>
        <begin position="603"/>
        <end position="619"/>
    </location>
</feature>
<feature type="binding site" evidence="2">
    <location>
        <position position="507"/>
    </location>
    <ligand>
        <name>Zn(2+)</name>
        <dbReference type="ChEBI" id="CHEBI:29105"/>
        <label>1</label>
    </ligand>
</feature>
<feature type="binding site" evidence="2">
    <location>
        <position position="510"/>
    </location>
    <ligand>
        <name>Zn(2+)</name>
        <dbReference type="ChEBI" id="CHEBI:29105"/>
        <label>1</label>
    </ligand>
</feature>
<feature type="binding site" evidence="2">
    <location>
        <position position="523"/>
    </location>
    <ligand>
        <name>Zn(2+)</name>
        <dbReference type="ChEBI" id="CHEBI:29105"/>
        <label>2</label>
    </ligand>
</feature>
<feature type="binding site" evidence="2">
    <location>
        <position position="526"/>
    </location>
    <ligand>
        <name>Zn(2+)</name>
        <dbReference type="ChEBI" id="CHEBI:29105"/>
        <label>2</label>
    </ligand>
</feature>
<feature type="binding site" evidence="2">
    <location>
        <position position="531"/>
    </location>
    <ligand>
        <name>Zn(2+)</name>
        <dbReference type="ChEBI" id="CHEBI:29105"/>
        <label>1</label>
    </ligand>
</feature>
<feature type="binding site" evidence="2">
    <location>
        <position position="534"/>
    </location>
    <ligand>
        <name>Zn(2+)</name>
        <dbReference type="ChEBI" id="CHEBI:29105"/>
        <label>1</label>
    </ligand>
</feature>
<feature type="binding site" evidence="2">
    <location>
        <position position="553"/>
    </location>
    <ligand>
        <name>Zn(2+)</name>
        <dbReference type="ChEBI" id="CHEBI:29105"/>
        <label>2</label>
    </ligand>
</feature>
<feature type="binding site" evidence="2">
    <location>
        <position position="556"/>
    </location>
    <ligand>
        <name>Zn(2+)</name>
        <dbReference type="ChEBI" id="CHEBI:29105"/>
        <label>2</label>
    </ligand>
</feature>
<name>LST2_BRUMA</name>
<comment type="function">
    <text evidence="1">Negative regulator of epidermal growth factor receptor (EGFR) signaling.</text>
</comment>
<comment type="similarity">
    <text evidence="4">Belongs to the lst-2 family.</text>
</comment>
<accession>A8QCE4</accession>
<protein>
    <recommendedName>
        <fullName>Lateral signaling target protein 2 homolog</fullName>
    </recommendedName>
</protein>
<dbReference type="EMBL" id="DS239429">
    <property type="protein sequence ID" value="EDP30050.1"/>
    <property type="molecule type" value="Genomic_DNA"/>
</dbReference>
<dbReference type="RefSeq" id="XP_001901370.1">
    <property type="nucleotide sequence ID" value="XM_001901335.1"/>
</dbReference>
<dbReference type="SMR" id="A8QCE4"/>
<dbReference type="FunCoup" id="A8QCE4">
    <property type="interactions" value="713"/>
</dbReference>
<dbReference type="WormBase" id="Bm5439">
    <property type="protein sequence ID" value="BM36079"/>
    <property type="gene ID" value="WBGene00225700"/>
</dbReference>
<dbReference type="InParanoid" id="A8QCE4"/>
<dbReference type="Proteomes" id="UP000006672">
    <property type="component" value="Unassembled WGS sequence"/>
</dbReference>
<dbReference type="GO" id="GO:0031901">
    <property type="term" value="C:early endosome membrane"/>
    <property type="evidence" value="ECO:0007669"/>
    <property type="project" value="TreeGrafter"/>
</dbReference>
<dbReference type="GO" id="GO:0008270">
    <property type="term" value="F:zinc ion binding"/>
    <property type="evidence" value="ECO:0007669"/>
    <property type="project" value="UniProtKB-KW"/>
</dbReference>
<dbReference type="CDD" id="cd15731">
    <property type="entry name" value="FYVE_LST2"/>
    <property type="match status" value="1"/>
</dbReference>
<dbReference type="Gene3D" id="3.30.40.10">
    <property type="entry name" value="Zinc/RING finger domain, C3HC4 (zinc finger)"/>
    <property type="match status" value="1"/>
</dbReference>
<dbReference type="InterPro" id="IPR043269">
    <property type="entry name" value="FYVE_LST2"/>
</dbReference>
<dbReference type="InterPro" id="IPR051118">
    <property type="entry name" value="LST-2"/>
</dbReference>
<dbReference type="InterPro" id="IPR000306">
    <property type="entry name" value="Znf_FYVE"/>
</dbReference>
<dbReference type="InterPro" id="IPR017455">
    <property type="entry name" value="Znf_FYVE-rel"/>
</dbReference>
<dbReference type="InterPro" id="IPR011011">
    <property type="entry name" value="Znf_FYVE_PHD"/>
</dbReference>
<dbReference type="InterPro" id="IPR013083">
    <property type="entry name" value="Znf_RING/FYVE/PHD"/>
</dbReference>
<dbReference type="PANTHER" id="PTHR46465">
    <property type="entry name" value="LATERAL SIGNALING TARGET PROTEIN 2 HOMOLOG"/>
    <property type="match status" value="1"/>
</dbReference>
<dbReference type="PANTHER" id="PTHR46465:SF2">
    <property type="entry name" value="LATERAL SIGNALING TARGET PROTEIN 2 HOMOLOG"/>
    <property type="match status" value="1"/>
</dbReference>
<dbReference type="Pfam" id="PF01363">
    <property type="entry name" value="FYVE"/>
    <property type="match status" value="1"/>
</dbReference>
<dbReference type="SMART" id="SM00064">
    <property type="entry name" value="FYVE"/>
    <property type="match status" value="1"/>
</dbReference>
<dbReference type="SUPFAM" id="SSF57903">
    <property type="entry name" value="FYVE/PHD zinc finger"/>
    <property type="match status" value="1"/>
</dbReference>
<dbReference type="PROSITE" id="PS50178">
    <property type="entry name" value="ZF_FYVE"/>
    <property type="match status" value="1"/>
</dbReference>
<sequence length="619" mass="69232">MAVVKVEFAISGKLVNKPRVDDWNPLAKFYYADEALNAVANELDSFDGRRDPERCSQLVNKLRQAQDRLLHIISEMIQQVFPRESDRACRDYRVKFPEEIMHDNLPGQLWFGAEANVIPVFGCTFSCLTAGSNIIDHEVESEAIRPMARALTKHLDTLRDLLKDQSLRDPTHYSDKVKRSLKHFDHLFAEFELNYVSAMVPVKSVREYDCQLDIAVLFSEALDRAVRLDYLTQDQIDDCDPIVMIAVPRLAIVCGLLYFPEGALNVDANPETLSNMFRSFHSLLVKIRDLLRILNLHELRRVEKALCTGETQVKFGEDSIVETLTVANFHLKTTGKGTGRILEAQNLQPNGSSSSNSSDGGDCDVSSASGSVCHTNTFAYKILSPIRLKDSSESSSIENSSKLDLLIMTHPPDPHRLRARFRSSADLIHRLFVCICGVADQLQTNYPTDLRRVLKMILQPNDVVPISGKTAPNPENEEEMGLEVQEALPLPSLIGVRWVPDSDCEQCTACSAQFTLVRRRHHCRNCGRIFCSRCSANSLPLPELGYDRKVRVCNLCFLYKINPFSPCTGQSNSSQNHSVIAFNSAVTSTAVVLNQVDHERSQDGSQSNESPTATTATTI</sequence>
<keyword id="KW-0479">Metal-binding</keyword>
<keyword id="KW-1185">Reference proteome</keyword>
<keyword id="KW-0862">Zinc</keyword>
<keyword id="KW-0863">Zinc-finger</keyword>
<proteinExistence type="inferred from homology"/>
<organism>
    <name type="scientific">Brugia malayi</name>
    <name type="common">Filarial nematode worm</name>
    <dbReference type="NCBI Taxonomy" id="6279"/>
    <lineage>
        <taxon>Eukaryota</taxon>
        <taxon>Metazoa</taxon>
        <taxon>Ecdysozoa</taxon>
        <taxon>Nematoda</taxon>
        <taxon>Chromadorea</taxon>
        <taxon>Rhabditida</taxon>
        <taxon>Spirurina</taxon>
        <taxon>Spiruromorpha</taxon>
        <taxon>Filarioidea</taxon>
        <taxon>Onchocercidae</taxon>
        <taxon>Brugia</taxon>
    </lineage>
</organism>